<organism>
    <name type="scientific">Escherichia coli O9:H4 (strain HS)</name>
    <dbReference type="NCBI Taxonomy" id="331112"/>
    <lineage>
        <taxon>Bacteria</taxon>
        <taxon>Pseudomonadati</taxon>
        <taxon>Pseudomonadota</taxon>
        <taxon>Gammaproteobacteria</taxon>
        <taxon>Enterobacterales</taxon>
        <taxon>Enterobacteriaceae</taxon>
        <taxon>Escherichia</taxon>
    </lineage>
</organism>
<reference key="1">
    <citation type="journal article" date="2008" name="J. Bacteriol.">
        <title>The pangenome structure of Escherichia coli: comparative genomic analysis of E. coli commensal and pathogenic isolates.</title>
        <authorList>
            <person name="Rasko D.A."/>
            <person name="Rosovitz M.J."/>
            <person name="Myers G.S.A."/>
            <person name="Mongodin E.F."/>
            <person name="Fricke W.F."/>
            <person name="Gajer P."/>
            <person name="Crabtree J."/>
            <person name="Sebaihia M."/>
            <person name="Thomson N.R."/>
            <person name="Chaudhuri R."/>
            <person name="Henderson I.R."/>
            <person name="Sperandio V."/>
            <person name="Ravel J."/>
        </authorList>
    </citation>
    <scope>NUCLEOTIDE SEQUENCE [LARGE SCALE GENOMIC DNA]</scope>
    <source>
        <strain>HS</strain>
    </source>
</reference>
<evidence type="ECO:0000255" key="1">
    <source>
        <dbReference type="HAMAP-Rule" id="MF_01275"/>
    </source>
</evidence>
<sequence>MQHKLLINGELVSGEGEKQPVYNPATGDVLLEIAEASAEQVDAAVRAADAAFAEWGQTTPKVRAECLLKLADVIEENGQVFAELESRNCGKPLHSAFNDEIPAIVDVFRFFAGAARCLNGLAAGEYLEGHTSMIRRDPLGVVASIAPWNYPLMMAAWKLAPALAAGNCVVLKPSEITPLTALKLAELAKDIFPAGVINILFGRGKTVGDPLTGHPKVRMVSLTGSIATGEHIISHTASSIKRTHMELGGKAPVIVFDDADIEAVVEGVRTFGYYNAGQDCTAACRIYAQKGIYDTLVEKLGAAVATLKSGAPDDESTELGPLSSLAHLERVSKAVEEAKATGHIKVITGGEKRKGNGYYYAPTLLAGALQDDAIVQKEVFGPVVSVTLFDNEEQVVNWANDSQYGLASSVWTKDVGRAHRVSARLQYGCTWVNTHFMLVSEMPHGGQKLSGYGKDMSLYGLEDYTVVRHVMVKH</sequence>
<protein>
    <recommendedName>
        <fullName evidence="1">Gamma-aminobutyraldehyde dehydrogenase</fullName>
        <shortName evidence="1">ABALDH</shortName>
        <ecNumber evidence="1">1.2.1.19</ecNumber>
    </recommendedName>
    <alternativeName>
        <fullName evidence="1">1-pyrroline dehydrogenase</fullName>
    </alternativeName>
    <alternativeName>
        <fullName evidence="1">4-aminobutanal dehydrogenase</fullName>
    </alternativeName>
    <alternativeName>
        <fullName evidence="1">5-aminopentanal dehydrogenase</fullName>
        <ecNumber evidence="1">1.2.1.-</ecNumber>
    </alternativeName>
</protein>
<proteinExistence type="inferred from homology"/>
<dbReference type="EC" id="1.2.1.19" evidence="1"/>
<dbReference type="EC" id="1.2.1.-" evidence="1"/>
<dbReference type="EMBL" id="CP000802">
    <property type="protein sequence ID" value="ABV05856.1"/>
    <property type="molecule type" value="Genomic_DNA"/>
</dbReference>
<dbReference type="RefSeq" id="WP_001163874.1">
    <property type="nucleotide sequence ID" value="NC_009800.1"/>
</dbReference>
<dbReference type="SMR" id="A8A002"/>
<dbReference type="KEGG" id="ecx:EcHS_A1528"/>
<dbReference type="HOGENOM" id="CLU_005391_0_0_6"/>
<dbReference type="UniPathway" id="UPA00188">
    <property type="reaction ID" value="UER00292"/>
</dbReference>
<dbReference type="GO" id="GO:0019145">
    <property type="term" value="F:aminobutyraldehyde dehydrogenase (NAD+) activity"/>
    <property type="evidence" value="ECO:0007669"/>
    <property type="project" value="UniProtKB-UniRule"/>
</dbReference>
<dbReference type="GO" id="GO:0051287">
    <property type="term" value="F:NAD binding"/>
    <property type="evidence" value="ECO:0007669"/>
    <property type="project" value="UniProtKB-UniRule"/>
</dbReference>
<dbReference type="GO" id="GO:0019477">
    <property type="term" value="P:L-lysine catabolic process"/>
    <property type="evidence" value="ECO:0007669"/>
    <property type="project" value="UniProtKB-UniRule"/>
</dbReference>
<dbReference type="GO" id="GO:0009447">
    <property type="term" value="P:putrescine catabolic process"/>
    <property type="evidence" value="ECO:0007669"/>
    <property type="project" value="UniProtKB-UniRule"/>
</dbReference>
<dbReference type="CDD" id="cd07092">
    <property type="entry name" value="ALDH_ABALDH-YdcW"/>
    <property type="match status" value="1"/>
</dbReference>
<dbReference type="FunFam" id="3.40.605.10:FF:000001">
    <property type="entry name" value="Aldehyde dehydrogenase 1"/>
    <property type="match status" value="1"/>
</dbReference>
<dbReference type="FunFam" id="3.40.309.10:FF:000010">
    <property type="entry name" value="Gamma-aminobutyraldehyde dehydrogenase"/>
    <property type="match status" value="1"/>
</dbReference>
<dbReference type="Gene3D" id="3.40.605.10">
    <property type="entry name" value="Aldehyde Dehydrogenase, Chain A, domain 1"/>
    <property type="match status" value="1"/>
</dbReference>
<dbReference type="Gene3D" id="3.40.309.10">
    <property type="entry name" value="Aldehyde Dehydrogenase, Chain A, domain 2"/>
    <property type="match status" value="1"/>
</dbReference>
<dbReference type="HAMAP" id="MF_01275">
    <property type="entry name" value="Aldedh_Prr"/>
    <property type="match status" value="1"/>
</dbReference>
<dbReference type="InterPro" id="IPR016161">
    <property type="entry name" value="Ald_DH/histidinol_DH"/>
</dbReference>
<dbReference type="InterPro" id="IPR016163">
    <property type="entry name" value="Ald_DH_C"/>
</dbReference>
<dbReference type="InterPro" id="IPR029510">
    <property type="entry name" value="Ald_DH_CS_GLU"/>
</dbReference>
<dbReference type="InterPro" id="IPR016162">
    <property type="entry name" value="Ald_DH_N"/>
</dbReference>
<dbReference type="InterPro" id="IPR015590">
    <property type="entry name" value="Aldehyde_DH_dom"/>
</dbReference>
<dbReference type="InterPro" id="IPR015657">
    <property type="entry name" value="Aminobutyraldehyde_DH"/>
</dbReference>
<dbReference type="InterPro" id="IPR017749">
    <property type="entry name" value="PatD"/>
</dbReference>
<dbReference type="NCBIfam" id="TIGR03374">
    <property type="entry name" value="ABALDH"/>
    <property type="match status" value="1"/>
</dbReference>
<dbReference type="NCBIfam" id="NF010000">
    <property type="entry name" value="PRK13473.1"/>
    <property type="match status" value="1"/>
</dbReference>
<dbReference type="PANTHER" id="PTHR11699">
    <property type="entry name" value="ALDEHYDE DEHYDROGENASE-RELATED"/>
    <property type="match status" value="1"/>
</dbReference>
<dbReference type="Pfam" id="PF00171">
    <property type="entry name" value="Aldedh"/>
    <property type="match status" value="1"/>
</dbReference>
<dbReference type="SUPFAM" id="SSF53720">
    <property type="entry name" value="ALDH-like"/>
    <property type="match status" value="1"/>
</dbReference>
<dbReference type="PROSITE" id="PS00687">
    <property type="entry name" value="ALDEHYDE_DEHYDR_GLU"/>
    <property type="match status" value="1"/>
</dbReference>
<gene>
    <name evidence="1" type="primary">patD</name>
    <name type="ordered locus">EcHS_A1528</name>
</gene>
<keyword id="KW-0520">NAD</keyword>
<keyword id="KW-0560">Oxidoreductase</keyword>
<accession>A8A002</accession>
<feature type="chain" id="PRO_1000067392" description="Gamma-aminobutyraldehyde dehydrogenase">
    <location>
        <begin position="1"/>
        <end position="474"/>
    </location>
</feature>
<feature type="active site" evidence="1">
    <location>
        <position position="246"/>
    </location>
</feature>
<feature type="active site" description="Nucleophile" evidence="1">
    <location>
        <position position="280"/>
    </location>
</feature>
<feature type="binding site" evidence="1">
    <location>
        <begin position="146"/>
        <end position="148"/>
    </location>
    <ligand>
        <name>NAD(+)</name>
        <dbReference type="ChEBI" id="CHEBI:57540"/>
    </ligand>
</feature>
<feature type="binding site" evidence="1">
    <location>
        <begin position="172"/>
        <end position="175"/>
    </location>
    <ligand>
        <name>NAD(+)</name>
        <dbReference type="ChEBI" id="CHEBI:57540"/>
    </ligand>
</feature>
<feature type="binding site" evidence="1">
    <location>
        <position position="209"/>
    </location>
    <ligand>
        <name>NAD(+)</name>
        <dbReference type="ChEBI" id="CHEBI:57540"/>
    </ligand>
</feature>
<feature type="binding site" evidence="1">
    <location>
        <begin position="225"/>
        <end position="228"/>
    </location>
    <ligand>
        <name>NAD(+)</name>
        <dbReference type="ChEBI" id="CHEBI:57540"/>
    </ligand>
</feature>
<feature type="binding site" evidence="1">
    <location>
        <position position="280"/>
    </location>
    <ligand>
        <name>NAD(+)</name>
        <dbReference type="ChEBI" id="CHEBI:57540"/>
    </ligand>
</feature>
<name>ABDH_ECOHS</name>
<comment type="function">
    <text evidence="1">Catalyzes the oxidation 4-aminobutanal (gamma-aminobutyraldehyde) to 4-aminobutanoate (gamma-aminobutyrate or GABA). This is the second step in one of two pathways for putrescine degradation, where putrescine is converted into 4-aminobutanoate via 4-aminobutanal. Also functions as a 5-aminopentanal dehydrogenase in a a L-lysine degradation pathway to succinate that proceeds via cadaverine, glutarate and L-2-hydroxyglutarate.</text>
</comment>
<comment type="catalytic activity">
    <reaction evidence="1">
        <text>4-aminobutanal + NAD(+) + H2O = 4-aminobutanoate + NADH + 2 H(+)</text>
        <dbReference type="Rhea" id="RHEA:19105"/>
        <dbReference type="ChEBI" id="CHEBI:15377"/>
        <dbReference type="ChEBI" id="CHEBI:15378"/>
        <dbReference type="ChEBI" id="CHEBI:57540"/>
        <dbReference type="ChEBI" id="CHEBI:57945"/>
        <dbReference type="ChEBI" id="CHEBI:58264"/>
        <dbReference type="ChEBI" id="CHEBI:59888"/>
        <dbReference type="EC" id="1.2.1.19"/>
    </reaction>
    <physiologicalReaction direction="left-to-right" evidence="1">
        <dbReference type="Rhea" id="RHEA:19106"/>
    </physiologicalReaction>
</comment>
<comment type="catalytic activity">
    <reaction evidence="1">
        <text>5-aminopentanal + NAD(+) + H2O = 5-aminopentanoate + NADH + 2 H(+)</text>
        <dbReference type="Rhea" id="RHEA:61632"/>
        <dbReference type="ChEBI" id="CHEBI:15377"/>
        <dbReference type="ChEBI" id="CHEBI:15378"/>
        <dbReference type="ChEBI" id="CHEBI:57540"/>
        <dbReference type="ChEBI" id="CHEBI:57945"/>
        <dbReference type="ChEBI" id="CHEBI:144896"/>
        <dbReference type="ChEBI" id="CHEBI:356010"/>
    </reaction>
    <physiologicalReaction direction="left-to-right" evidence="1">
        <dbReference type="Rhea" id="RHEA:61633"/>
    </physiologicalReaction>
</comment>
<comment type="pathway">
    <text evidence="1">Amine and polyamine degradation; putrescine degradation; 4-aminobutanoate from 4-aminobutanal: step 1/1.</text>
</comment>
<comment type="pathway">
    <text evidence="1">Amino-acid degradation.</text>
</comment>
<comment type="subunit">
    <text evidence="1">Homotetramer.</text>
</comment>
<comment type="miscellaneous">
    <text evidence="1">4-aminobutanal can spontaneously cyclize to 1-pyrroline, and 5-aminopentanal to 1-piperideine.</text>
</comment>
<comment type="similarity">
    <text evidence="1">Belongs to the aldehyde dehydrogenase family. Gamma-aminobutyraldehyde dehydrogenase subfamily.</text>
</comment>